<dbReference type="EMBL" id="CP000240">
    <property type="protein sequence ID" value="ABD02430.1"/>
    <property type="molecule type" value="Genomic_DNA"/>
</dbReference>
<dbReference type="RefSeq" id="WP_011433078.1">
    <property type="nucleotide sequence ID" value="NC_007776.1"/>
</dbReference>
<dbReference type="STRING" id="321332.CYB_1463"/>
<dbReference type="KEGG" id="cyb:CYB_1463"/>
<dbReference type="eggNOG" id="ENOG502Z7YX">
    <property type="taxonomic scope" value="Bacteria"/>
</dbReference>
<dbReference type="HOGENOM" id="CLU_095465_0_0_3"/>
<dbReference type="OrthoDB" id="7059574at2"/>
<dbReference type="Proteomes" id="UP000001938">
    <property type="component" value="Chromosome"/>
</dbReference>
<dbReference type="GO" id="GO:0009522">
    <property type="term" value="C:photosystem I"/>
    <property type="evidence" value="ECO:0007669"/>
    <property type="project" value="InterPro"/>
</dbReference>
<dbReference type="GO" id="GO:0031676">
    <property type="term" value="C:plasma membrane-derived thylakoid membrane"/>
    <property type="evidence" value="ECO:0007669"/>
    <property type="project" value="UniProtKB-SubCell"/>
</dbReference>
<dbReference type="GO" id="GO:0015979">
    <property type="term" value="P:photosynthesis"/>
    <property type="evidence" value="ECO:0007669"/>
    <property type="project" value="UniProtKB-UniRule"/>
</dbReference>
<dbReference type="HAMAP" id="MF_00437">
    <property type="entry name" value="Ycf4"/>
    <property type="match status" value="1"/>
</dbReference>
<dbReference type="InterPro" id="IPR003359">
    <property type="entry name" value="PSI_Ycf4_assembly"/>
</dbReference>
<dbReference type="NCBIfam" id="NF002712">
    <property type="entry name" value="PRK02542.1"/>
    <property type="match status" value="1"/>
</dbReference>
<dbReference type="Pfam" id="PF02392">
    <property type="entry name" value="Ycf4"/>
    <property type="match status" value="1"/>
</dbReference>
<reference key="1">
    <citation type="journal article" date="2007" name="ISME J.">
        <title>Population level functional diversity in a microbial community revealed by comparative genomic and metagenomic analyses.</title>
        <authorList>
            <person name="Bhaya D."/>
            <person name="Grossman A.R."/>
            <person name="Steunou A.-S."/>
            <person name="Khuri N."/>
            <person name="Cohan F.M."/>
            <person name="Hamamura N."/>
            <person name="Melendrez M.C."/>
            <person name="Bateson M.M."/>
            <person name="Ward D.M."/>
            <person name="Heidelberg J.F."/>
        </authorList>
    </citation>
    <scope>NUCLEOTIDE SEQUENCE [LARGE SCALE GENOMIC DNA]</scope>
    <source>
        <strain>JA-2-3B'a(2-13)</strain>
    </source>
</reference>
<proteinExistence type="inferred from homology"/>
<comment type="function">
    <text evidence="1">Seems to be required for the assembly of the photosystem I complex.</text>
</comment>
<comment type="subcellular location">
    <subcellularLocation>
        <location evidence="1">Cellular thylakoid membrane</location>
        <topology evidence="1">Multi-pass membrane protein</topology>
    </subcellularLocation>
</comment>
<comment type="similarity">
    <text evidence="1">Belongs to the Ycf4 family.</text>
</comment>
<feature type="chain" id="PRO_0000325986" description="Photosystem I assembly protein Ycf4">
    <location>
        <begin position="1"/>
        <end position="189"/>
    </location>
</feature>
<feature type="transmembrane region" description="Helical" evidence="1">
    <location>
        <begin position="25"/>
        <end position="45"/>
    </location>
</feature>
<feature type="transmembrane region" description="Helical" evidence="1">
    <location>
        <begin position="62"/>
        <end position="82"/>
    </location>
</feature>
<organism>
    <name type="scientific">Synechococcus sp. (strain JA-2-3B'a(2-13))</name>
    <name type="common">Cyanobacteria bacterium Yellowstone B-Prime</name>
    <dbReference type="NCBI Taxonomy" id="321332"/>
    <lineage>
        <taxon>Bacteria</taxon>
        <taxon>Bacillati</taxon>
        <taxon>Cyanobacteriota</taxon>
        <taxon>Cyanophyceae</taxon>
        <taxon>Synechococcales</taxon>
        <taxon>Synechococcaceae</taxon>
        <taxon>Synechococcus</taxon>
    </lineage>
</organism>
<protein>
    <recommendedName>
        <fullName evidence="1">Photosystem I assembly protein Ycf4</fullName>
    </recommendedName>
</protein>
<keyword id="KW-0472">Membrane</keyword>
<keyword id="KW-0602">Photosynthesis</keyword>
<keyword id="KW-1185">Reference proteome</keyword>
<keyword id="KW-0793">Thylakoid</keyword>
<keyword id="KW-0812">Transmembrane</keyword>
<keyword id="KW-1133">Transmembrane helix</keyword>
<evidence type="ECO:0000255" key="1">
    <source>
        <dbReference type="HAMAP-Rule" id="MF_00437"/>
    </source>
</evidence>
<sequence>MSAIVPEIRSADLLRYTVIGSRRPSVYFWAVALTGGGLGFTLAGLSSYLHRNLLPFSDPASLVFIPQGIAMLFYGVLGSLAGLYQWLSLYWNLGGGYNEFDRRTQKITLVRQGFPGKNREVRLEYDFADVQSLRVELREGLNPRRAIYLRVKGRGDIPLTGVGQPPPLTEIENQAAEIARFLNVSLEGI</sequence>
<name>YCF4_SYNJB</name>
<accession>Q2JHG9</accession>
<gene>
    <name evidence="1" type="primary">ycf4</name>
    <name type="ordered locus">CYB_1463</name>
</gene>